<gene>
    <name type="primary">PKNOX2</name>
</gene>
<organism>
    <name type="scientific">Pongo abelii</name>
    <name type="common">Sumatran orangutan</name>
    <name type="synonym">Pongo pygmaeus abelii</name>
    <dbReference type="NCBI Taxonomy" id="9601"/>
    <lineage>
        <taxon>Eukaryota</taxon>
        <taxon>Metazoa</taxon>
        <taxon>Chordata</taxon>
        <taxon>Craniata</taxon>
        <taxon>Vertebrata</taxon>
        <taxon>Euteleostomi</taxon>
        <taxon>Mammalia</taxon>
        <taxon>Eutheria</taxon>
        <taxon>Euarchontoglires</taxon>
        <taxon>Primates</taxon>
        <taxon>Haplorrhini</taxon>
        <taxon>Catarrhini</taxon>
        <taxon>Hominidae</taxon>
        <taxon>Pongo</taxon>
    </lineage>
</organism>
<dbReference type="EMBL" id="CR860477">
    <property type="protein sequence ID" value="CAH92599.1"/>
    <property type="molecule type" value="mRNA"/>
</dbReference>
<dbReference type="RefSeq" id="NP_001127567.1">
    <property type="nucleotide sequence ID" value="NM_001134095.1"/>
</dbReference>
<dbReference type="SMR" id="Q5R6L1"/>
<dbReference type="FunCoup" id="Q5R6L1">
    <property type="interactions" value="304"/>
</dbReference>
<dbReference type="STRING" id="9601.ENSPPYP00000004607"/>
<dbReference type="GeneID" id="100174645"/>
<dbReference type="KEGG" id="pon:100174645"/>
<dbReference type="CTD" id="63876"/>
<dbReference type="eggNOG" id="KOG0773">
    <property type="taxonomic scope" value="Eukaryota"/>
</dbReference>
<dbReference type="InParanoid" id="Q5R6L1"/>
<dbReference type="OrthoDB" id="10056939at2759"/>
<dbReference type="Proteomes" id="UP000001595">
    <property type="component" value="Unplaced"/>
</dbReference>
<dbReference type="GO" id="GO:0005634">
    <property type="term" value="C:nucleus"/>
    <property type="evidence" value="ECO:0007669"/>
    <property type="project" value="UniProtKB-SubCell"/>
</dbReference>
<dbReference type="GO" id="GO:0003677">
    <property type="term" value="F:DNA binding"/>
    <property type="evidence" value="ECO:0007669"/>
    <property type="project" value="UniProtKB-KW"/>
</dbReference>
<dbReference type="GO" id="GO:0006355">
    <property type="term" value="P:regulation of DNA-templated transcription"/>
    <property type="evidence" value="ECO:0007669"/>
    <property type="project" value="InterPro"/>
</dbReference>
<dbReference type="CDD" id="cd00086">
    <property type="entry name" value="homeodomain"/>
    <property type="match status" value="1"/>
</dbReference>
<dbReference type="FunFam" id="1.10.10.60:FF:000004">
    <property type="entry name" value="Meis2 homeobox isoform 2c"/>
    <property type="match status" value="1"/>
</dbReference>
<dbReference type="Gene3D" id="1.10.10.60">
    <property type="entry name" value="Homeodomain-like"/>
    <property type="match status" value="1"/>
</dbReference>
<dbReference type="InterPro" id="IPR001356">
    <property type="entry name" value="HD"/>
</dbReference>
<dbReference type="InterPro" id="IPR009057">
    <property type="entry name" value="Homeodomain-like_sf"/>
</dbReference>
<dbReference type="InterPro" id="IPR008422">
    <property type="entry name" value="KN_HD"/>
</dbReference>
<dbReference type="InterPro" id="IPR032453">
    <property type="entry name" value="PKNOX/Meis_N"/>
</dbReference>
<dbReference type="InterPro" id="IPR050224">
    <property type="entry name" value="TALE_homeobox"/>
</dbReference>
<dbReference type="PANTHER" id="PTHR11850">
    <property type="entry name" value="HOMEOBOX PROTEIN TRANSCRIPTION FACTORS"/>
    <property type="match status" value="1"/>
</dbReference>
<dbReference type="Pfam" id="PF05920">
    <property type="entry name" value="Homeobox_KN"/>
    <property type="match status" value="1"/>
</dbReference>
<dbReference type="Pfam" id="PF16493">
    <property type="entry name" value="Meis_PKNOX_N"/>
    <property type="match status" value="1"/>
</dbReference>
<dbReference type="SMART" id="SM00389">
    <property type="entry name" value="HOX"/>
    <property type="match status" value="1"/>
</dbReference>
<dbReference type="SUPFAM" id="SSF46689">
    <property type="entry name" value="Homeodomain-like"/>
    <property type="match status" value="1"/>
</dbReference>
<dbReference type="PROSITE" id="PS50071">
    <property type="entry name" value="HOMEOBOX_2"/>
    <property type="match status" value="1"/>
</dbReference>
<keyword id="KW-0238">DNA-binding</keyword>
<keyword id="KW-0371">Homeobox</keyword>
<keyword id="KW-0539">Nucleus</keyword>
<keyword id="KW-1185">Reference proteome</keyword>
<name>PKNX2_PONAB</name>
<feature type="chain" id="PRO_0000249879" description="Homeobox protein PKNOX2">
    <location>
        <begin position="1"/>
        <end position="472"/>
    </location>
</feature>
<feature type="domain" description="MEIS N-terminal" evidence="1">
    <location>
        <begin position="96"/>
        <end position="179"/>
    </location>
</feature>
<feature type="DNA-binding region" description="Homeobox" evidence="2">
    <location>
        <begin position="291"/>
        <end position="350"/>
    </location>
</feature>
<feature type="region of interest" description="Disordered" evidence="3">
    <location>
        <begin position="1"/>
        <end position="62"/>
    </location>
</feature>
<feature type="region of interest" description="Disordered" evidence="3">
    <location>
        <begin position="351"/>
        <end position="371"/>
    </location>
</feature>
<feature type="region of interest" description="Disordered" evidence="3">
    <location>
        <begin position="386"/>
        <end position="405"/>
    </location>
</feature>
<feature type="region of interest" description="Disordered" evidence="3">
    <location>
        <begin position="423"/>
        <end position="472"/>
    </location>
</feature>
<feature type="compositionally biased region" description="Polar residues" evidence="3">
    <location>
        <begin position="26"/>
        <end position="38"/>
    </location>
</feature>
<feature type="compositionally biased region" description="Low complexity" evidence="3">
    <location>
        <begin position="46"/>
        <end position="56"/>
    </location>
</feature>
<feature type="compositionally biased region" description="Basic residues" evidence="3">
    <location>
        <begin position="361"/>
        <end position="371"/>
    </location>
</feature>
<feature type="compositionally biased region" description="Polar residues" evidence="3">
    <location>
        <begin position="396"/>
        <end position="405"/>
    </location>
</feature>
<feature type="compositionally biased region" description="Acidic residues" evidence="3">
    <location>
        <begin position="429"/>
        <end position="454"/>
    </location>
</feature>
<proteinExistence type="evidence at transcript level"/>
<reference key="1">
    <citation type="submission" date="2004-11" db="EMBL/GenBank/DDBJ databases">
        <authorList>
            <consortium name="The German cDNA consortium"/>
        </authorList>
    </citation>
    <scope>NUCLEOTIDE SEQUENCE [LARGE SCALE MRNA]</scope>
    <source>
        <tissue>Brain cortex</tissue>
    </source>
</reference>
<comment type="subcellular location">
    <subcellularLocation>
        <location evidence="2">Nucleus</location>
    </subcellularLocation>
</comment>
<comment type="similarity">
    <text evidence="4">Belongs to the TALE/MEIS homeobox family.</text>
</comment>
<sequence length="472" mass="52041">MMQHASPAPALTMMATQNVPPPPYQDSPQMTATTQPPSKAQAVHISAPSAAASTPVPSAPIDPQAQLEADKRAVYRHPLFPLLTLLFEKCEQATQGSECITSASFDVDIENFVHQQEQEHKPFFSDDPELDNLMVKAIQVLRIHLLELEKVNELCKDFCNRYITCLKTKMHSDNLLRNDLGGPYSPNQPSINLHSQDLLQNSPNSMSGVSNNPQGIVVPASALQQGNIAMTTVNSQVVSGGALYQPVTMVTSQGQVVTQAIPQGAIQIQNTQVNLDLTSLLDNEDKKSKNKRGVLPKHATNIMRSWLFQHLMHPYPTEDEKRQIAAQTNLTLLQVNNWFVNARRRILQPMLDASNPDPAPKAKKIKSQHRPTQRFWPNSIAAGVLQQQGGAPGTNPDGSINLDNLQSLSSDNATMAMQQAMMAAHDDSLDGTEEEDEDEMEEEEEEELEEEVDELQTTNVSDLGLEHSDSLV</sequence>
<evidence type="ECO:0000255" key="1"/>
<evidence type="ECO:0000255" key="2">
    <source>
        <dbReference type="PROSITE-ProRule" id="PRU00108"/>
    </source>
</evidence>
<evidence type="ECO:0000256" key="3">
    <source>
        <dbReference type="SAM" id="MobiDB-lite"/>
    </source>
</evidence>
<evidence type="ECO:0000305" key="4"/>
<protein>
    <recommendedName>
        <fullName>Homeobox protein PKNOX2</fullName>
    </recommendedName>
    <alternativeName>
        <fullName>PBX/knotted homeobox 2</fullName>
    </alternativeName>
</protein>
<accession>Q5R6L1</accession>